<reference key="1">
    <citation type="submission" date="2007-06" db="EMBL/GenBank/DDBJ databases">
        <title>Complete sequence of Methanococcus aeolicus Nankai-3.</title>
        <authorList>
            <consortium name="US DOE Joint Genome Institute"/>
            <person name="Copeland A."/>
            <person name="Lucas S."/>
            <person name="Lapidus A."/>
            <person name="Barry K."/>
            <person name="Glavina del Rio T."/>
            <person name="Dalin E."/>
            <person name="Tice H."/>
            <person name="Pitluck S."/>
            <person name="Chain P."/>
            <person name="Malfatti S."/>
            <person name="Shin M."/>
            <person name="Vergez L."/>
            <person name="Schmutz J."/>
            <person name="Larimer F."/>
            <person name="Land M."/>
            <person name="Hauser L."/>
            <person name="Kyrpides N."/>
            <person name="Lykidis A."/>
            <person name="Sieprawska-Lupa M."/>
            <person name="Whitman W.B."/>
            <person name="Richardson P."/>
        </authorList>
    </citation>
    <scope>NUCLEOTIDE SEQUENCE [LARGE SCALE GENOMIC DNA]</scope>
    <source>
        <strain>ATCC BAA-1280 / DSM 17508 / OCM 812 / Nankai-3</strain>
    </source>
</reference>
<feature type="chain" id="PRO_1000068106" description="Large ribosomal subunit protein uL23">
    <location>
        <begin position="1"/>
        <end position="86"/>
    </location>
</feature>
<comment type="function">
    <text evidence="1">Binds to 23S rRNA. One of the proteins that surrounds the polypeptide exit tunnel on the outside of the ribosome.</text>
</comment>
<comment type="subunit">
    <text evidence="1">Part of the 50S ribosomal subunit. Contacts protein L29.</text>
</comment>
<comment type="similarity">
    <text evidence="1">Belongs to the universal ribosomal protein uL23 family.</text>
</comment>
<name>RL23_META3</name>
<protein>
    <recommendedName>
        <fullName evidence="1">Large ribosomal subunit protein uL23</fullName>
    </recommendedName>
    <alternativeName>
        <fullName evidence="2">50S ribosomal protein L23</fullName>
    </alternativeName>
</protein>
<accession>A6UV66</accession>
<keyword id="KW-0687">Ribonucleoprotein</keyword>
<keyword id="KW-0689">Ribosomal protein</keyword>
<keyword id="KW-0694">RNA-binding</keyword>
<keyword id="KW-0699">rRNA-binding</keyword>
<evidence type="ECO:0000255" key="1">
    <source>
        <dbReference type="HAMAP-Rule" id="MF_01369"/>
    </source>
</evidence>
<evidence type="ECO:0000305" key="2"/>
<proteinExistence type="inferred from homology"/>
<organism>
    <name type="scientific">Methanococcus aeolicus (strain ATCC BAA-1280 / DSM 17508 / OCM 812 / Nankai-3)</name>
    <dbReference type="NCBI Taxonomy" id="419665"/>
    <lineage>
        <taxon>Archaea</taxon>
        <taxon>Methanobacteriati</taxon>
        <taxon>Methanobacteriota</taxon>
        <taxon>Methanomada group</taxon>
        <taxon>Methanococci</taxon>
        <taxon>Methanococcales</taxon>
        <taxon>Methanococcaceae</taxon>
        <taxon>Methanococcus</taxon>
    </lineage>
</organism>
<dbReference type="EMBL" id="CP000743">
    <property type="protein sequence ID" value="ABR56388.1"/>
    <property type="molecule type" value="Genomic_DNA"/>
</dbReference>
<dbReference type="RefSeq" id="WP_011973520.1">
    <property type="nucleotide sequence ID" value="NC_009635.1"/>
</dbReference>
<dbReference type="SMR" id="A6UV66"/>
<dbReference type="STRING" id="419665.Maeo_0805"/>
<dbReference type="GeneID" id="5326508"/>
<dbReference type="KEGG" id="mae:Maeo_0805"/>
<dbReference type="eggNOG" id="arCOG04072">
    <property type="taxonomic scope" value="Archaea"/>
</dbReference>
<dbReference type="HOGENOM" id="CLU_037562_4_2_2"/>
<dbReference type="OrthoDB" id="7751at2157"/>
<dbReference type="Proteomes" id="UP000001106">
    <property type="component" value="Chromosome"/>
</dbReference>
<dbReference type="GO" id="GO:1990904">
    <property type="term" value="C:ribonucleoprotein complex"/>
    <property type="evidence" value="ECO:0007669"/>
    <property type="project" value="UniProtKB-KW"/>
</dbReference>
<dbReference type="GO" id="GO:0005840">
    <property type="term" value="C:ribosome"/>
    <property type="evidence" value="ECO:0007669"/>
    <property type="project" value="UniProtKB-KW"/>
</dbReference>
<dbReference type="GO" id="GO:0019843">
    <property type="term" value="F:rRNA binding"/>
    <property type="evidence" value="ECO:0007669"/>
    <property type="project" value="UniProtKB-UniRule"/>
</dbReference>
<dbReference type="GO" id="GO:0003735">
    <property type="term" value="F:structural constituent of ribosome"/>
    <property type="evidence" value="ECO:0007669"/>
    <property type="project" value="InterPro"/>
</dbReference>
<dbReference type="GO" id="GO:0006412">
    <property type="term" value="P:translation"/>
    <property type="evidence" value="ECO:0007669"/>
    <property type="project" value="UniProtKB-UniRule"/>
</dbReference>
<dbReference type="FunFam" id="3.30.70.330:FF:000532">
    <property type="entry name" value="50S ribosomal protein L23"/>
    <property type="match status" value="1"/>
</dbReference>
<dbReference type="Gene3D" id="3.30.70.330">
    <property type="match status" value="1"/>
</dbReference>
<dbReference type="HAMAP" id="MF_01369_A">
    <property type="entry name" value="Ribosomal_uL23_A"/>
    <property type="match status" value="1"/>
</dbReference>
<dbReference type="HAMAP" id="MF_01369_B">
    <property type="entry name" value="Ribosomal_uL23_B"/>
    <property type="match status" value="1"/>
</dbReference>
<dbReference type="InterPro" id="IPR012677">
    <property type="entry name" value="Nucleotide-bd_a/b_plait_sf"/>
</dbReference>
<dbReference type="InterPro" id="IPR019985">
    <property type="entry name" value="Ribosomal_uL23"/>
</dbReference>
<dbReference type="InterPro" id="IPR013025">
    <property type="entry name" value="Ribosomal_uL23-like"/>
</dbReference>
<dbReference type="InterPro" id="IPR012678">
    <property type="entry name" value="Ribosomal_uL23/eL15/eS24_sf"/>
</dbReference>
<dbReference type="InterPro" id="IPR001014">
    <property type="entry name" value="Ribosomal_uL23_CS"/>
</dbReference>
<dbReference type="NCBIfam" id="NF011118">
    <property type="entry name" value="PRK14548.1"/>
    <property type="match status" value="1"/>
</dbReference>
<dbReference type="NCBIfam" id="TIGR03636">
    <property type="entry name" value="uL23_arch"/>
    <property type="match status" value="1"/>
</dbReference>
<dbReference type="PANTHER" id="PTHR11620">
    <property type="entry name" value="60S RIBOSOMAL PROTEIN L23A"/>
    <property type="match status" value="1"/>
</dbReference>
<dbReference type="Pfam" id="PF00276">
    <property type="entry name" value="Ribosomal_L23"/>
    <property type="match status" value="1"/>
</dbReference>
<dbReference type="SUPFAM" id="SSF54189">
    <property type="entry name" value="Ribosomal proteins S24e, L23 and L15e"/>
    <property type="match status" value="1"/>
</dbReference>
<dbReference type="PROSITE" id="PS00050">
    <property type="entry name" value="RIBOSOMAL_L23"/>
    <property type="match status" value="1"/>
</dbReference>
<gene>
    <name evidence="1" type="primary">rpl23</name>
    <name type="ordered locus">Maeo_0805</name>
</gene>
<sequence length="86" mass="9814">MDAFDVIKMPIISEKTMKLIEEENKLVFYIDKKATKTDVKNAVKELFDVEVKDLNTLITPKGKKKAYIKLKDEYDAGEVAANLGIY</sequence>